<name>Y1631_AQUAE</name>
<sequence length="163" mass="18651">MEFYPIHILLSKLEEEIAFQQKMATTYLVSPPKYSPEVIGTVSETLRRISADLKLVSLILGELEEVQERDIKEEALILSSESLSLISLLLPAIEKYAPFFLESMKVERKPILEKLEDVMAEIENAIEKLELSSSREIIRSLEELAQSLEISLKMGERILERES</sequence>
<gene>
    <name type="ordered locus">aq_1631</name>
</gene>
<feature type="chain" id="PRO_0000186941" description="Uncharacterized protein aq_1631">
    <location>
        <begin position="1"/>
        <end position="163"/>
    </location>
</feature>
<feature type="coiled-coil region" evidence="1">
    <location>
        <begin position="101"/>
        <end position="162"/>
    </location>
</feature>
<dbReference type="EMBL" id="AE000657">
    <property type="protein sequence ID" value="AAC07518.1"/>
    <property type="molecule type" value="Genomic_DNA"/>
</dbReference>
<dbReference type="PIR" id="G70440">
    <property type="entry name" value="G70440"/>
</dbReference>
<dbReference type="RefSeq" id="NP_214118.1">
    <property type="nucleotide sequence ID" value="NC_000918.1"/>
</dbReference>
<dbReference type="RefSeq" id="WP_010881056.1">
    <property type="nucleotide sequence ID" value="NC_000918.1"/>
</dbReference>
<dbReference type="STRING" id="224324.aq_1631"/>
<dbReference type="EnsemblBacteria" id="AAC07518">
    <property type="protein sequence ID" value="AAC07518"/>
    <property type="gene ID" value="aq_1631"/>
</dbReference>
<dbReference type="KEGG" id="aae:aq_1631"/>
<dbReference type="HOGENOM" id="CLU_1623737_0_0_0"/>
<dbReference type="InParanoid" id="O67553"/>
<dbReference type="OrthoDB" id="14192at2"/>
<dbReference type="Proteomes" id="UP000000798">
    <property type="component" value="Chromosome"/>
</dbReference>
<reference key="1">
    <citation type="journal article" date="1998" name="Nature">
        <title>The complete genome of the hyperthermophilic bacterium Aquifex aeolicus.</title>
        <authorList>
            <person name="Deckert G."/>
            <person name="Warren P.V."/>
            <person name="Gaasterland T."/>
            <person name="Young W.G."/>
            <person name="Lenox A.L."/>
            <person name="Graham D.E."/>
            <person name="Overbeek R."/>
            <person name="Snead M.A."/>
            <person name="Keller M."/>
            <person name="Aujay M."/>
            <person name="Huber R."/>
            <person name="Feldman R.A."/>
            <person name="Short J.M."/>
            <person name="Olsen G.J."/>
            <person name="Swanson R.V."/>
        </authorList>
    </citation>
    <scope>NUCLEOTIDE SEQUENCE [LARGE SCALE GENOMIC DNA]</scope>
    <source>
        <strain>VF5</strain>
    </source>
</reference>
<evidence type="ECO:0000255" key="1"/>
<organism>
    <name type="scientific">Aquifex aeolicus (strain VF5)</name>
    <dbReference type="NCBI Taxonomy" id="224324"/>
    <lineage>
        <taxon>Bacteria</taxon>
        <taxon>Pseudomonadati</taxon>
        <taxon>Aquificota</taxon>
        <taxon>Aquificia</taxon>
        <taxon>Aquificales</taxon>
        <taxon>Aquificaceae</taxon>
        <taxon>Aquifex</taxon>
    </lineage>
</organism>
<accession>O67553</accession>
<keyword id="KW-0175">Coiled coil</keyword>
<keyword id="KW-1185">Reference proteome</keyword>
<protein>
    <recommendedName>
        <fullName>Uncharacterized protein aq_1631</fullName>
    </recommendedName>
</protein>
<proteinExistence type="predicted"/>